<name>RUVB_SALNS</name>
<comment type="function">
    <text evidence="1">The RuvA-RuvB-RuvC complex processes Holliday junction (HJ) DNA during genetic recombination and DNA repair, while the RuvA-RuvB complex plays an important role in the rescue of blocked DNA replication forks via replication fork reversal (RFR). RuvA specifically binds to HJ cruciform DNA, conferring on it an open structure. The RuvB hexamer acts as an ATP-dependent pump, pulling dsDNA into and through the RuvAB complex. RuvB forms 2 homohexamers on either side of HJ DNA bound by 1 or 2 RuvA tetramers; 4 subunits per hexamer contact DNA at a time. Coordinated motions by a converter formed by DNA-disengaged RuvB subunits stimulates ATP hydrolysis and nucleotide exchange. Immobilization of the converter enables RuvB to convert the ATP-contained energy into a lever motion, pulling 2 nucleotides of DNA out of the RuvA tetramer per ATP hydrolyzed, thus driving DNA branch migration. The RuvB motors rotate together with the DNA substrate, which together with the progressing nucleotide cycle form the mechanistic basis for DNA recombination by continuous HJ branch migration. Branch migration allows RuvC to scan DNA until it finds its consensus sequence, where it cleaves and resolves cruciform DNA.</text>
</comment>
<comment type="catalytic activity">
    <reaction evidence="1">
        <text>ATP + H2O = ADP + phosphate + H(+)</text>
        <dbReference type="Rhea" id="RHEA:13065"/>
        <dbReference type="ChEBI" id="CHEBI:15377"/>
        <dbReference type="ChEBI" id="CHEBI:15378"/>
        <dbReference type="ChEBI" id="CHEBI:30616"/>
        <dbReference type="ChEBI" id="CHEBI:43474"/>
        <dbReference type="ChEBI" id="CHEBI:456216"/>
    </reaction>
</comment>
<comment type="subunit">
    <text evidence="1">Homohexamer. Forms an RuvA(8)-RuvB(12)-Holliday junction (HJ) complex. HJ DNA is sandwiched between 2 RuvA tetramers; dsDNA enters through RuvA and exits via RuvB. An RuvB hexamer assembles on each DNA strand where it exits the tetramer. Each RuvB hexamer is contacted by two RuvA subunits (via domain III) on 2 adjacent RuvB subunits; this complex drives branch migration. In the full resolvosome a probable DNA-RuvA(4)-RuvB(12)-RuvC(2) complex forms which resolves the HJ.</text>
</comment>
<comment type="subcellular location">
    <subcellularLocation>
        <location evidence="1">Cytoplasm</location>
    </subcellularLocation>
</comment>
<comment type="domain">
    <text evidence="1">Has 3 domains, the large (RuvB-L) and small ATPase (RuvB-S) domains and the C-terminal head (RuvB-H) domain. The head domain binds DNA, while the ATPase domains jointly bind ATP, ADP or are empty depending on the state of the subunit in the translocation cycle. During a single DNA translocation step the structure of each domain remains the same, but their relative positions change.</text>
</comment>
<comment type="similarity">
    <text evidence="1">Belongs to the RuvB family.</text>
</comment>
<reference key="1">
    <citation type="journal article" date="2011" name="J. Bacteriol.">
        <title>Comparative genomics of 28 Salmonella enterica isolates: evidence for CRISPR-mediated adaptive sublineage evolution.</title>
        <authorList>
            <person name="Fricke W.F."/>
            <person name="Mammel M.K."/>
            <person name="McDermott P.F."/>
            <person name="Tartera C."/>
            <person name="White D.G."/>
            <person name="Leclerc J.E."/>
            <person name="Ravel J."/>
            <person name="Cebula T.A."/>
        </authorList>
    </citation>
    <scope>NUCLEOTIDE SEQUENCE [LARGE SCALE GENOMIC DNA]</scope>
    <source>
        <strain>SL254</strain>
    </source>
</reference>
<protein>
    <recommendedName>
        <fullName evidence="1">Holliday junction branch migration complex subunit RuvB</fullName>
        <ecNumber evidence="1">3.6.4.-</ecNumber>
    </recommendedName>
</protein>
<dbReference type="EC" id="3.6.4.-" evidence="1"/>
<dbReference type="EMBL" id="CP001113">
    <property type="protein sequence ID" value="ACF62034.1"/>
    <property type="molecule type" value="Genomic_DNA"/>
</dbReference>
<dbReference type="RefSeq" id="WP_000568504.1">
    <property type="nucleotide sequence ID" value="NZ_CCMR01000003.1"/>
</dbReference>
<dbReference type="SMR" id="B4SVE4"/>
<dbReference type="KEGG" id="see:SNSL254_A2053"/>
<dbReference type="HOGENOM" id="CLU_055599_1_0_6"/>
<dbReference type="Proteomes" id="UP000008824">
    <property type="component" value="Chromosome"/>
</dbReference>
<dbReference type="GO" id="GO:0005737">
    <property type="term" value="C:cytoplasm"/>
    <property type="evidence" value="ECO:0007669"/>
    <property type="project" value="UniProtKB-SubCell"/>
</dbReference>
<dbReference type="GO" id="GO:0048476">
    <property type="term" value="C:Holliday junction resolvase complex"/>
    <property type="evidence" value="ECO:0007669"/>
    <property type="project" value="UniProtKB-UniRule"/>
</dbReference>
<dbReference type="GO" id="GO:0005524">
    <property type="term" value="F:ATP binding"/>
    <property type="evidence" value="ECO:0007669"/>
    <property type="project" value="UniProtKB-UniRule"/>
</dbReference>
<dbReference type="GO" id="GO:0016887">
    <property type="term" value="F:ATP hydrolysis activity"/>
    <property type="evidence" value="ECO:0007669"/>
    <property type="project" value="InterPro"/>
</dbReference>
<dbReference type="GO" id="GO:0000400">
    <property type="term" value="F:four-way junction DNA binding"/>
    <property type="evidence" value="ECO:0007669"/>
    <property type="project" value="UniProtKB-UniRule"/>
</dbReference>
<dbReference type="GO" id="GO:0009378">
    <property type="term" value="F:four-way junction helicase activity"/>
    <property type="evidence" value="ECO:0007669"/>
    <property type="project" value="InterPro"/>
</dbReference>
<dbReference type="GO" id="GO:0006310">
    <property type="term" value="P:DNA recombination"/>
    <property type="evidence" value="ECO:0007669"/>
    <property type="project" value="UniProtKB-UniRule"/>
</dbReference>
<dbReference type="GO" id="GO:0006281">
    <property type="term" value="P:DNA repair"/>
    <property type="evidence" value="ECO:0007669"/>
    <property type="project" value="UniProtKB-UniRule"/>
</dbReference>
<dbReference type="CDD" id="cd00009">
    <property type="entry name" value="AAA"/>
    <property type="match status" value="1"/>
</dbReference>
<dbReference type="FunFam" id="1.10.10.10:FF:000086">
    <property type="entry name" value="Holliday junction ATP-dependent DNA helicase RuvB"/>
    <property type="match status" value="1"/>
</dbReference>
<dbReference type="FunFam" id="1.10.8.60:FF:000023">
    <property type="entry name" value="Holliday junction ATP-dependent DNA helicase RuvB"/>
    <property type="match status" value="1"/>
</dbReference>
<dbReference type="FunFam" id="3.40.50.300:FF:000073">
    <property type="entry name" value="Holliday junction ATP-dependent DNA helicase RuvB"/>
    <property type="match status" value="1"/>
</dbReference>
<dbReference type="Gene3D" id="1.10.8.60">
    <property type="match status" value="1"/>
</dbReference>
<dbReference type="Gene3D" id="3.40.50.300">
    <property type="entry name" value="P-loop containing nucleotide triphosphate hydrolases"/>
    <property type="match status" value="1"/>
</dbReference>
<dbReference type="Gene3D" id="1.10.10.10">
    <property type="entry name" value="Winged helix-like DNA-binding domain superfamily/Winged helix DNA-binding domain"/>
    <property type="match status" value="1"/>
</dbReference>
<dbReference type="HAMAP" id="MF_00016">
    <property type="entry name" value="DNA_HJ_migration_RuvB"/>
    <property type="match status" value="1"/>
</dbReference>
<dbReference type="InterPro" id="IPR003593">
    <property type="entry name" value="AAA+_ATPase"/>
</dbReference>
<dbReference type="InterPro" id="IPR041445">
    <property type="entry name" value="AAA_lid_4"/>
</dbReference>
<dbReference type="InterPro" id="IPR004605">
    <property type="entry name" value="DNA_helicase_Holl-junc_RuvB"/>
</dbReference>
<dbReference type="InterPro" id="IPR027417">
    <property type="entry name" value="P-loop_NTPase"/>
</dbReference>
<dbReference type="InterPro" id="IPR008824">
    <property type="entry name" value="RuvB-like_N"/>
</dbReference>
<dbReference type="InterPro" id="IPR008823">
    <property type="entry name" value="RuvB_C"/>
</dbReference>
<dbReference type="InterPro" id="IPR036388">
    <property type="entry name" value="WH-like_DNA-bd_sf"/>
</dbReference>
<dbReference type="InterPro" id="IPR036390">
    <property type="entry name" value="WH_DNA-bd_sf"/>
</dbReference>
<dbReference type="NCBIfam" id="NF000868">
    <property type="entry name" value="PRK00080.1"/>
    <property type="match status" value="1"/>
</dbReference>
<dbReference type="NCBIfam" id="TIGR00635">
    <property type="entry name" value="ruvB"/>
    <property type="match status" value="1"/>
</dbReference>
<dbReference type="PANTHER" id="PTHR42848">
    <property type="match status" value="1"/>
</dbReference>
<dbReference type="PANTHER" id="PTHR42848:SF1">
    <property type="entry name" value="HOLLIDAY JUNCTION BRANCH MIGRATION COMPLEX SUBUNIT RUVB"/>
    <property type="match status" value="1"/>
</dbReference>
<dbReference type="Pfam" id="PF17864">
    <property type="entry name" value="AAA_lid_4"/>
    <property type="match status" value="1"/>
</dbReference>
<dbReference type="Pfam" id="PF05491">
    <property type="entry name" value="RuvB_C"/>
    <property type="match status" value="1"/>
</dbReference>
<dbReference type="Pfam" id="PF05496">
    <property type="entry name" value="RuvB_N"/>
    <property type="match status" value="1"/>
</dbReference>
<dbReference type="SMART" id="SM00382">
    <property type="entry name" value="AAA"/>
    <property type="match status" value="1"/>
</dbReference>
<dbReference type="SUPFAM" id="SSF52540">
    <property type="entry name" value="P-loop containing nucleoside triphosphate hydrolases"/>
    <property type="match status" value="1"/>
</dbReference>
<dbReference type="SUPFAM" id="SSF46785">
    <property type="entry name" value="Winged helix' DNA-binding domain"/>
    <property type="match status" value="1"/>
</dbReference>
<proteinExistence type="inferred from homology"/>
<evidence type="ECO:0000255" key="1">
    <source>
        <dbReference type="HAMAP-Rule" id="MF_00016"/>
    </source>
</evidence>
<gene>
    <name evidence="1" type="primary">ruvB</name>
    <name type="ordered locus">SNSL254_A2053</name>
</gene>
<sequence length="336" mass="36976">MIEADRLISAGATIAEDVADRAIRPKLLAEYVGQPQVRSQMEIFIQAAKLRGDALDHLLIFGPPGLGKTTLANIVANEMGVNLRTTSGPVLEKAGDLAAMLTNLEPHDVLFIDEIHRLSPVVEEVLYPAMEDYQLDIMIGEGPAARSIKIDLPPFTLIGATTRAGSLTSPLRDRFGIVQRLEFYQVPDLQHIVGRSARHMGLEMSDDGALEVARRARGTPRIANRLLRRVRDFAEVKHDGAISAEIAAQALDMLNVDAEGFDYMDRKLLLAVIDKFFGGPVGLDNLAAAIGEERETIEDVLEPYLIQQGFLQRTPRGRMATVRAWNHFGITPPEMP</sequence>
<feature type="chain" id="PRO_1000089674" description="Holliday junction branch migration complex subunit RuvB">
    <location>
        <begin position="1"/>
        <end position="336"/>
    </location>
</feature>
<feature type="region of interest" description="Large ATPase domain (RuvB-L)" evidence="1">
    <location>
        <begin position="4"/>
        <end position="184"/>
    </location>
</feature>
<feature type="region of interest" description="Small ATPAse domain (RuvB-S)" evidence="1">
    <location>
        <begin position="185"/>
        <end position="255"/>
    </location>
</feature>
<feature type="region of interest" description="Head domain (RuvB-H)" evidence="1">
    <location>
        <begin position="258"/>
        <end position="336"/>
    </location>
</feature>
<feature type="binding site" evidence="1">
    <location>
        <position position="23"/>
    </location>
    <ligand>
        <name>ATP</name>
        <dbReference type="ChEBI" id="CHEBI:30616"/>
    </ligand>
</feature>
<feature type="binding site" evidence="1">
    <location>
        <position position="24"/>
    </location>
    <ligand>
        <name>ATP</name>
        <dbReference type="ChEBI" id="CHEBI:30616"/>
    </ligand>
</feature>
<feature type="binding site" evidence="1">
    <location>
        <position position="65"/>
    </location>
    <ligand>
        <name>ATP</name>
        <dbReference type="ChEBI" id="CHEBI:30616"/>
    </ligand>
</feature>
<feature type="binding site" evidence="1">
    <location>
        <position position="68"/>
    </location>
    <ligand>
        <name>ATP</name>
        <dbReference type="ChEBI" id="CHEBI:30616"/>
    </ligand>
</feature>
<feature type="binding site" evidence="1">
    <location>
        <position position="69"/>
    </location>
    <ligand>
        <name>ATP</name>
        <dbReference type="ChEBI" id="CHEBI:30616"/>
    </ligand>
</feature>
<feature type="binding site" evidence="1">
    <location>
        <position position="69"/>
    </location>
    <ligand>
        <name>Mg(2+)</name>
        <dbReference type="ChEBI" id="CHEBI:18420"/>
    </ligand>
</feature>
<feature type="binding site" evidence="1">
    <location>
        <position position="70"/>
    </location>
    <ligand>
        <name>ATP</name>
        <dbReference type="ChEBI" id="CHEBI:30616"/>
    </ligand>
</feature>
<feature type="binding site" evidence="1">
    <location>
        <begin position="131"/>
        <end position="133"/>
    </location>
    <ligand>
        <name>ATP</name>
        <dbReference type="ChEBI" id="CHEBI:30616"/>
    </ligand>
</feature>
<feature type="binding site" evidence="1">
    <location>
        <position position="174"/>
    </location>
    <ligand>
        <name>ATP</name>
        <dbReference type="ChEBI" id="CHEBI:30616"/>
    </ligand>
</feature>
<feature type="binding site" evidence="1">
    <location>
        <position position="184"/>
    </location>
    <ligand>
        <name>ATP</name>
        <dbReference type="ChEBI" id="CHEBI:30616"/>
    </ligand>
</feature>
<feature type="binding site" evidence="1">
    <location>
        <position position="221"/>
    </location>
    <ligand>
        <name>ATP</name>
        <dbReference type="ChEBI" id="CHEBI:30616"/>
    </ligand>
</feature>
<feature type="binding site" evidence="1">
    <location>
        <position position="294"/>
    </location>
    <ligand>
        <name>DNA</name>
        <dbReference type="ChEBI" id="CHEBI:16991"/>
    </ligand>
</feature>
<feature type="binding site" evidence="1">
    <location>
        <position position="313"/>
    </location>
    <ligand>
        <name>DNA</name>
        <dbReference type="ChEBI" id="CHEBI:16991"/>
    </ligand>
</feature>
<feature type="binding site" evidence="1">
    <location>
        <position position="318"/>
    </location>
    <ligand>
        <name>DNA</name>
        <dbReference type="ChEBI" id="CHEBI:16991"/>
    </ligand>
</feature>
<organism>
    <name type="scientific">Salmonella newport (strain SL254)</name>
    <dbReference type="NCBI Taxonomy" id="423368"/>
    <lineage>
        <taxon>Bacteria</taxon>
        <taxon>Pseudomonadati</taxon>
        <taxon>Pseudomonadota</taxon>
        <taxon>Gammaproteobacteria</taxon>
        <taxon>Enterobacterales</taxon>
        <taxon>Enterobacteriaceae</taxon>
        <taxon>Salmonella</taxon>
    </lineage>
</organism>
<accession>B4SVE4</accession>
<keyword id="KW-0067">ATP-binding</keyword>
<keyword id="KW-0963">Cytoplasm</keyword>
<keyword id="KW-0227">DNA damage</keyword>
<keyword id="KW-0233">DNA recombination</keyword>
<keyword id="KW-0234">DNA repair</keyword>
<keyword id="KW-0238">DNA-binding</keyword>
<keyword id="KW-0378">Hydrolase</keyword>
<keyword id="KW-0547">Nucleotide-binding</keyword>